<keyword id="KW-1185">Reference proteome</keyword>
<keyword id="KW-0687">Ribonucleoprotein</keyword>
<keyword id="KW-0689">Ribosomal protein</keyword>
<keyword id="KW-0694">RNA-binding</keyword>
<keyword id="KW-0699">rRNA-binding</keyword>
<accession>B5Z8P0</accession>
<protein>
    <recommendedName>
        <fullName evidence="1">Small ribosomal subunit protein bS18</fullName>
    </recommendedName>
    <alternativeName>
        <fullName evidence="2">30S ribosomal protein S18</fullName>
    </alternativeName>
</protein>
<proteinExistence type="inferred from homology"/>
<dbReference type="EMBL" id="CP001173">
    <property type="protein sequence ID" value="ACI27939.1"/>
    <property type="molecule type" value="Genomic_DNA"/>
</dbReference>
<dbReference type="RefSeq" id="WP_000440196.1">
    <property type="nucleotide sequence ID" value="NC_011333.1"/>
</dbReference>
<dbReference type="SMR" id="B5Z8P0"/>
<dbReference type="KEGG" id="hpg:HPG27_1189"/>
<dbReference type="HOGENOM" id="CLU_148710_2_2_7"/>
<dbReference type="Proteomes" id="UP000001735">
    <property type="component" value="Chromosome"/>
</dbReference>
<dbReference type="GO" id="GO:0022627">
    <property type="term" value="C:cytosolic small ribosomal subunit"/>
    <property type="evidence" value="ECO:0007669"/>
    <property type="project" value="TreeGrafter"/>
</dbReference>
<dbReference type="GO" id="GO:0070181">
    <property type="term" value="F:small ribosomal subunit rRNA binding"/>
    <property type="evidence" value="ECO:0007669"/>
    <property type="project" value="TreeGrafter"/>
</dbReference>
<dbReference type="GO" id="GO:0003735">
    <property type="term" value="F:structural constituent of ribosome"/>
    <property type="evidence" value="ECO:0007669"/>
    <property type="project" value="InterPro"/>
</dbReference>
<dbReference type="GO" id="GO:0006412">
    <property type="term" value="P:translation"/>
    <property type="evidence" value="ECO:0007669"/>
    <property type="project" value="UniProtKB-UniRule"/>
</dbReference>
<dbReference type="FunFam" id="4.10.640.10:FF:000005">
    <property type="entry name" value="30S ribosomal protein S18"/>
    <property type="match status" value="1"/>
</dbReference>
<dbReference type="Gene3D" id="4.10.640.10">
    <property type="entry name" value="Ribosomal protein S18"/>
    <property type="match status" value="1"/>
</dbReference>
<dbReference type="HAMAP" id="MF_00270">
    <property type="entry name" value="Ribosomal_bS18"/>
    <property type="match status" value="1"/>
</dbReference>
<dbReference type="InterPro" id="IPR001648">
    <property type="entry name" value="Ribosomal_bS18"/>
</dbReference>
<dbReference type="InterPro" id="IPR018275">
    <property type="entry name" value="Ribosomal_bS18_CS"/>
</dbReference>
<dbReference type="InterPro" id="IPR036870">
    <property type="entry name" value="Ribosomal_bS18_sf"/>
</dbReference>
<dbReference type="NCBIfam" id="TIGR00165">
    <property type="entry name" value="S18"/>
    <property type="match status" value="1"/>
</dbReference>
<dbReference type="PANTHER" id="PTHR13479">
    <property type="entry name" value="30S RIBOSOMAL PROTEIN S18"/>
    <property type="match status" value="1"/>
</dbReference>
<dbReference type="PANTHER" id="PTHR13479:SF40">
    <property type="entry name" value="SMALL RIBOSOMAL SUBUNIT PROTEIN BS18M"/>
    <property type="match status" value="1"/>
</dbReference>
<dbReference type="Pfam" id="PF01084">
    <property type="entry name" value="Ribosomal_S18"/>
    <property type="match status" value="1"/>
</dbReference>
<dbReference type="PRINTS" id="PR00974">
    <property type="entry name" value="RIBOSOMALS18"/>
</dbReference>
<dbReference type="SUPFAM" id="SSF46911">
    <property type="entry name" value="Ribosomal protein S18"/>
    <property type="match status" value="1"/>
</dbReference>
<dbReference type="PROSITE" id="PS00057">
    <property type="entry name" value="RIBOSOMAL_S18"/>
    <property type="match status" value="1"/>
</dbReference>
<gene>
    <name evidence="1" type="primary">rpsR</name>
    <name type="ordered locus">HPG27_1189</name>
</gene>
<sequence>MERKRYSKRYCKYTEAKISFIDYKDLDMLKHTLSERYKIMPRRLTGNSKKWQERVEVAIKRARHMALIPYIVDRKKVVDSPFKQH</sequence>
<organism>
    <name type="scientific">Helicobacter pylori (strain G27)</name>
    <dbReference type="NCBI Taxonomy" id="563041"/>
    <lineage>
        <taxon>Bacteria</taxon>
        <taxon>Pseudomonadati</taxon>
        <taxon>Campylobacterota</taxon>
        <taxon>Epsilonproteobacteria</taxon>
        <taxon>Campylobacterales</taxon>
        <taxon>Helicobacteraceae</taxon>
        <taxon>Helicobacter</taxon>
    </lineage>
</organism>
<name>RS18_HELPG</name>
<feature type="chain" id="PRO_1000114424" description="Small ribosomal subunit protein bS18">
    <location>
        <begin position="1"/>
        <end position="85"/>
    </location>
</feature>
<evidence type="ECO:0000255" key="1">
    <source>
        <dbReference type="HAMAP-Rule" id="MF_00270"/>
    </source>
</evidence>
<evidence type="ECO:0000305" key="2"/>
<comment type="function">
    <text evidence="1">Binds as a heterodimer with protein bS6 to the central domain of the 16S rRNA, where it helps stabilize the platform of the 30S subunit.</text>
</comment>
<comment type="subunit">
    <text evidence="1">Part of the 30S ribosomal subunit. Forms a tight heterodimer with protein bS6.</text>
</comment>
<comment type="similarity">
    <text evidence="1">Belongs to the bacterial ribosomal protein bS18 family.</text>
</comment>
<reference key="1">
    <citation type="journal article" date="2009" name="J. Bacteriol.">
        <title>The complete genome sequence of Helicobacter pylori strain G27.</title>
        <authorList>
            <person name="Baltrus D.A."/>
            <person name="Amieva M.R."/>
            <person name="Covacci A."/>
            <person name="Lowe T.M."/>
            <person name="Merrell D.S."/>
            <person name="Ottemann K.M."/>
            <person name="Stein M."/>
            <person name="Salama N.R."/>
            <person name="Guillemin K."/>
        </authorList>
    </citation>
    <scope>NUCLEOTIDE SEQUENCE [LARGE SCALE GENOMIC DNA]</scope>
    <source>
        <strain>G27</strain>
    </source>
</reference>